<gene>
    <name type="primary">mus-8</name>
    <name type="synonym">ubc2</name>
    <name type="ORF">NCU09731</name>
</gene>
<proteinExistence type="inferred from homology"/>
<accession>P52493</accession>
<accession>Q7RVK4</accession>
<dbReference type="EC" id="2.3.2.23"/>
<dbReference type="EMBL" id="D78372">
    <property type="protein sequence ID" value="BAA11380.1"/>
    <property type="molecule type" value="Genomic_DNA"/>
</dbReference>
<dbReference type="EMBL" id="CM002239">
    <property type="protein sequence ID" value="EAA35197.3"/>
    <property type="molecule type" value="Genomic_DNA"/>
</dbReference>
<dbReference type="PIR" id="S71430">
    <property type="entry name" value="S71430"/>
</dbReference>
<dbReference type="RefSeq" id="XP_964433.3">
    <property type="nucleotide sequence ID" value="XM_959340.3"/>
</dbReference>
<dbReference type="SMR" id="P52493"/>
<dbReference type="FunCoup" id="P52493">
    <property type="interactions" value="784"/>
</dbReference>
<dbReference type="STRING" id="367110.P52493"/>
<dbReference type="PaxDb" id="5141-EFNCRP00000009483"/>
<dbReference type="EnsemblFungi" id="EAA35197">
    <property type="protein sequence ID" value="EAA35197"/>
    <property type="gene ID" value="NCU09731"/>
</dbReference>
<dbReference type="GeneID" id="3880595"/>
<dbReference type="KEGG" id="ncr:NCU09731"/>
<dbReference type="VEuPathDB" id="FungiDB:NCU09731"/>
<dbReference type="HOGENOM" id="CLU_030988_10_2_1"/>
<dbReference type="InParanoid" id="P52493"/>
<dbReference type="OrthoDB" id="9984419at2759"/>
<dbReference type="UniPathway" id="UPA00143"/>
<dbReference type="Proteomes" id="UP000001805">
    <property type="component" value="Chromosome 4, Linkage Group IV"/>
</dbReference>
<dbReference type="GO" id="GO:0000781">
    <property type="term" value="C:chromosome, telomeric region"/>
    <property type="evidence" value="ECO:0007669"/>
    <property type="project" value="GOC"/>
</dbReference>
<dbReference type="GO" id="GO:0005737">
    <property type="term" value="C:cytoplasm"/>
    <property type="evidence" value="ECO:0007669"/>
    <property type="project" value="UniProtKB-SubCell"/>
</dbReference>
<dbReference type="GO" id="GO:0033503">
    <property type="term" value="C:HULC complex"/>
    <property type="evidence" value="ECO:0000318"/>
    <property type="project" value="GO_Central"/>
</dbReference>
<dbReference type="GO" id="GO:1990304">
    <property type="term" value="C:MUB1-RAD6-UBR2 ubiquitin ligase complex"/>
    <property type="evidence" value="ECO:0007669"/>
    <property type="project" value="EnsemblFungi"/>
</dbReference>
<dbReference type="GO" id="GO:0005634">
    <property type="term" value="C:nucleus"/>
    <property type="evidence" value="ECO:0007669"/>
    <property type="project" value="UniProtKB-SubCell"/>
</dbReference>
<dbReference type="GO" id="GO:0097505">
    <property type="term" value="C:Rad6-Rad18 complex"/>
    <property type="evidence" value="ECO:0007669"/>
    <property type="project" value="EnsemblFungi"/>
</dbReference>
<dbReference type="GO" id="GO:1990305">
    <property type="term" value="C:RAD6-UBR2 ubiquitin ligase complex"/>
    <property type="evidence" value="ECO:0007669"/>
    <property type="project" value="EnsemblFungi"/>
</dbReference>
<dbReference type="GO" id="GO:1990303">
    <property type="term" value="C:UBR1-RAD6 ubiquitin ligase complex"/>
    <property type="evidence" value="ECO:0007669"/>
    <property type="project" value="EnsemblFungi"/>
</dbReference>
<dbReference type="GO" id="GO:0005524">
    <property type="term" value="F:ATP binding"/>
    <property type="evidence" value="ECO:0007669"/>
    <property type="project" value="UniProtKB-KW"/>
</dbReference>
<dbReference type="GO" id="GO:0070628">
    <property type="term" value="F:proteasome binding"/>
    <property type="evidence" value="ECO:0007669"/>
    <property type="project" value="EnsemblFungi"/>
</dbReference>
<dbReference type="GO" id="GO:0003697">
    <property type="term" value="F:single-stranded DNA binding"/>
    <property type="evidence" value="ECO:0007669"/>
    <property type="project" value="EnsemblFungi"/>
</dbReference>
<dbReference type="GO" id="GO:0017116">
    <property type="term" value="F:single-stranded DNA helicase activity"/>
    <property type="evidence" value="ECO:0007669"/>
    <property type="project" value="EnsemblFungi"/>
</dbReference>
<dbReference type="GO" id="GO:0061631">
    <property type="term" value="F:ubiquitin conjugating enzyme activity"/>
    <property type="evidence" value="ECO:0000318"/>
    <property type="project" value="GO_Central"/>
</dbReference>
<dbReference type="GO" id="GO:0034620">
    <property type="term" value="P:cellular response to unfolded protein"/>
    <property type="evidence" value="ECO:0007669"/>
    <property type="project" value="EnsemblFungi"/>
</dbReference>
<dbReference type="GO" id="GO:0071629">
    <property type="term" value="P:cytoplasm protein quality control by the ubiquitin-proteasome system"/>
    <property type="evidence" value="ECO:0007669"/>
    <property type="project" value="EnsemblFungi"/>
</dbReference>
<dbReference type="GO" id="GO:0006281">
    <property type="term" value="P:DNA repair"/>
    <property type="evidence" value="ECO:0000318"/>
    <property type="project" value="GO_Central"/>
</dbReference>
<dbReference type="GO" id="GO:0006353">
    <property type="term" value="P:DNA-templated transcription termination"/>
    <property type="evidence" value="ECO:0007669"/>
    <property type="project" value="EnsemblFungi"/>
</dbReference>
<dbReference type="GO" id="GO:0000724">
    <property type="term" value="P:double-strand break repair via homologous recombination"/>
    <property type="evidence" value="ECO:0007669"/>
    <property type="project" value="EnsemblFungi"/>
</dbReference>
<dbReference type="GO" id="GO:0036503">
    <property type="term" value="P:ERAD pathway"/>
    <property type="evidence" value="ECO:0007669"/>
    <property type="project" value="EnsemblFungi"/>
</dbReference>
<dbReference type="GO" id="GO:0042275">
    <property type="term" value="P:error-free postreplication DNA repair"/>
    <property type="evidence" value="ECO:0007669"/>
    <property type="project" value="EnsemblFungi"/>
</dbReference>
<dbReference type="GO" id="GO:0070987">
    <property type="term" value="P:error-free translesion synthesis"/>
    <property type="evidence" value="ECO:0007669"/>
    <property type="project" value="EnsemblFungi"/>
</dbReference>
<dbReference type="GO" id="GO:0042276">
    <property type="term" value="P:error-prone translesion synthesis"/>
    <property type="evidence" value="ECO:0007669"/>
    <property type="project" value="EnsemblFungi"/>
</dbReference>
<dbReference type="GO" id="GO:0042138">
    <property type="term" value="P:meiotic DNA double-strand break formation"/>
    <property type="evidence" value="ECO:0007669"/>
    <property type="project" value="EnsemblFungi"/>
</dbReference>
<dbReference type="GO" id="GO:0031571">
    <property type="term" value="P:mitotic G1 DNA damage checkpoint signaling"/>
    <property type="evidence" value="ECO:0007669"/>
    <property type="project" value="EnsemblFungi"/>
</dbReference>
<dbReference type="GO" id="GO:2000639">
    <property type="term" value="P:negative regulation of SREBP signaling pathway"/>
    <property type="evidence" value="ECO:0007669"/>
    <property type="project" value="EnsemblFungi"/>
</dbReference>
<dbReference type="GO" id="GO:0043161">
    <property type="term" value="P:proteasome-mediated ubiquitin-dependent protein catabolic process"/>
    <property type="evidence" value="ECO:0000318"/>
    <property type="project" value="GO_Central"/>
</dbReference>
<dbReference type="GO" id="GO:0000209">
    <property type="term" value="P:protein polyubiquitination"/>
    <property type="evidence" value="ECO:0000318"/>
    <property type="project" value="GO_Central"/>
</dbReference>
<dbReference type="GO" id="GO:0090089">
    <property type="term" value="P:regulation of dipeptide transport"/>
    <property type="evidence" value="ECO:0007669"/>
    <property type="project" value="EnsemblFungi"/>
</dbReference>
<dbReference type="GO" id="GO:0009302">
    <property type="term" value="P:sno(s)RNA transcription"/>
    <property type="evidence" value="ECO:0007669"/>
    <property type="project" value="EnsemblFungi"/>
</dbReference>
<dbReference type="GO" id="GO:0030435">
    <property type="term" value="P:sporulation resulting in formation of a cellular spore"/>
    <property type="evidence" value="ECO:0007669"/>
    <property type="project" value="UniProtKB-KW"/>
</dbReference>
<dbReference type="GO" id="GO:0120174">
    <property type="term" value="P:stress-induced homeostatically regulated protein degradation pathway"/>
    <property type="evidence" value="ECO:0007669"/>
    <property type="project" value="EnsemblFungi"/>
</dbReference>
<dbReference type="GO" id="GO:0031509">
    <property type="term" value="P:subtelomeric heterochromatin formation"/>
    <property type="evidence" value="ECO:0007669"/>
    <property type="project" value="EnsemblFungi"/>
</dbReference>
<dbReference type="GO" id="GO:0000722">
    <property type="term" value="P:telomere maintenance via recombination"/>
    <property type="evidence" value="ECO:0007669"/>
    <property type="project" value="EnsemblFungi"/>
</dbReference>
<dbReference type="GO" id="GO:0006366">
    <property type="term" value="P:transcription by RNA polymerase II"/>
    <property type="evidence" value="ECO:0007669"/>
    <property type="project" value="EnsemblFungi"/>
</dbReference>
<dbReference type="GO" id="GO:0071596">
    <property type="term" value="P:ubiquitin-dependent protein catabolic process via the N-end rule pathway"/>
    <property type="evidence" value="ECO:0007669"/>
    <property type="project" value="EnsemblFungi"/>
</dbReference>
<dbReference type="CDD" id="cd23790">
    <property type="entry name" value="UBCc_UBE2A_2B"/>
    <property type="match status" value="1"/>
</dbReference>
<dbReference type="FunFam" id="3.10.110.10:FF:000007">
    <property type="entry name" value="Ubiquitin-conjugating enzyme E2 2"/>
    <property type="match status" value="1"/>
</dbReference>
<dbReference type="Gene3D" id="3.10.110.10">
    <property type="entry name" value="Ubiquitin Conjugating Enzyme"/>
    <property type="match status" value="1"/>
</dbReference>
<dbReference type="InterPro" id="IPR050113">
    <property type="entry name" value="Ub_conjugating_enzyme"/>
</dbReference>
<dbReference type="InterPro" id="IPR000608">
    <property type="entry name" value="UBQ-conjugat_E2_core"/>
</dbReference>
<dbReference type="InterPro" id="IPR023313">
    <property type="entry name" value="UBQ-conjugating_AS"/>
</dbReference>
<dbReference type="InterPro" id="IPR016135">
    <property type="entry name" value="UBQ-conjugating_enzyme/RWD"/>
</dbReference>
<dbReference type="PANTHER" id="PTHR24067">
    <property type="entry name" value="UBIQUITIN-CONJUGATING ENZYME E2"/>
    <property type="match status" value="1"/>
</dbReference>
<dbReference type="Pfam" id="PF00179">
    <property type="entry name" value="UQ_con"/>
    <property type="match status" value="1"/>
</dbReference>
<dbReference type="SMART" id="SM00212">
    <property type="entry name" value="UBCc"/>
    <property type="match status" value="1"/>
</dbReference>
<dbReference type="SUPFAM" id="SSF54495">
    <property type="entry name" value="UBC-like"/>
    <property type="match status" value="1"/>
</dbReference>
<dbReference type="PROSITE" id="PS00183">
    <property type="entry name" value="UBC_1"/>
    <property type="match status" value="1"/>
</dbReference>
<dbReference type="PROSITE" id="PS50127">
    <property type="entry name" value="UBC_2"/>
    <property type="match status" value="1"/>
</dbReference>
<keyword id="KW-0067">ATP-binding</keyword>
<keyword id="KW-0156">Chromatin regulator</keyword>
<keyword id="KW-0963">Cytoplasm</keyword>
<keyword id="KW-0227">DNA damage</keyword>
<keyword id="KW-0234">DNA repair</keyword>
<keyword id="KW-0547">Nucleotide-binding</keyword>
<keyword id="KW-0539">Nucleus</keyword>
<keyword id="KW-1185">Reference proteome</keyword>
<keyword id="KW-0749">Sporulation</keyword>
<keyword id="KW-0804">Transcription</keyword>
<keyword id="KW-0805">Transcription regulation</keyword>
<keyword id="KW-0808">Transferase</keyword>
<keyword id="KW-0833">Ubl conjugation pathway</keyword>
<feature type="chain" id="PRO_0000082535" description="Ubiquitin-conjugating enzyme E2 2">
    <location>
        <begin position="1"/>
        <end position="151"/>
    </location>
</feature>
<feature type="domain" description="UBC core" evidence="2">
    <location>
        <begin position="4"/>
        <end position="150"/>
    </location>
</feature>
<feature type="active site" description="Glycyl thioester intermediate" evidence="2 3">
    <location>
        <position position="88"/>
    </location>
</feature>
<sequence length="151" mass="17204">MSTAARRRLMRDFKRMQTDPPAGVSASPVPDNVMTWNAVIIGPADTPFEDGTFRLVMHFEEQYPNKPPSVKFISEMFHPNVYATGELCLDILQNRWSPTYDVAAVLTSIQSLLNDPNTGSPANVEASNLYKDNRKEYHKRVRETVEKSWED</sequence>
<evidence type="ECO:0000250" key="1">
    <source>
        <dbReference type="UniProtKB" id="Q5VVX9"/>
    </source>
</evidence>
<evidence type="ECO:0000255" key="2">
    <source>
        <dbReference type="PROSITE-ProRule" id="PRU00388"/>
    </source>
</evidence>
<evidence type="ECO:0000255" key="3">
    <source>
        <dbReference type="PROSITE-ProRule" id="PRU10133"/>
    </source>
</evidence>
<reference key="1">
    <citation type="journal article" date="1996" name="Curr. Genet.">
        <title>The mus-8 gene of Neurospora crassa encodes a structural and functional homolog of the Rad6 protein of Saccharomyces cerevisiae.</title>
        <authorList>
            <person name="Soshi T."/>
            <person name="Sakuraba Y."/>
            <person name="Kaefer E."/>
            <person name="Inoue H."/>
        </authorList>
    </citation>
    <scope>NUCLEOTIDE SEQUENCE [GENOMIC DNA]</scope>
</reference>
<reference key="2">
    <citation type="journal article" date="2003" name="Nature">
        <title>The genome sequence of the filamentous fungus Neurospora crassa.</title>
        <authorList>
            <person name="Galagan J.E."/>
            <person name="Calvo S.E."/>
            <person name="Borkovich K.A."/>
            <person name="Selker E.U."/>
            <person name="Read N.D."/>
            <person name="Jaffe D.B."/>
            <person name="FitzHugh W."/>
            <person name="Ma L.-J."/>
            <person name="Smirnov S."/>
            <person name="Purcell S."/>
            <person name="Rehman B."/>
            <person name="Elkins T."/>
            <person name="Engels R."/>
            <person name="Wang S."/>
            <person name="Nielsen C.B."/>
            <person name="Butler J."/>
            <person name="Endrizzi M."/>
            <person name="Qui D."/>
            <person name="Ianakiev P."/>
            <person name="Bell-Pedersen D."/>
            <person name="Nelson M.A."/>
            <person name="Werner-Washburne M."/>
            <person name="Selitrennikoff C.P."/>
            <person name="Kinsey J.A."/>
            <person name="Braun E.L."/>
            <person name="Zelter A."/>
            <person name="Schulte U."/>
            <person name="Kothe G.O."/>
            <person name="Jedd G."/>
            <person name="Mewes H.-W."/>
            <person name="Staben C."/>
            <person name="Marcotte E."/>
            <person name="Greenberg D."/>
            <person name="Roy A."/>
            <person name="Foley K."/>
            <person name="Naylor J."/>
            <person name="Stange-Thomann N."/>
            <person name="Barrett R."/>
            <person name="Gnerre S."/>
            <person name="Kamal M."/>
            <person name="Kamvysselis M."/>
            <person name="Mauceli E.W."/>
            <person name="Bielke C."/>
            <person name="Rudd S."/>
            <person name="Frishman D."/>
            <person name="Krystofova S."/>
            <person name="Rasmussen C."/>
            <person name="Metzenberg R.L."/>
            <person name="Perkins D.D."/>
            <person name="Kroken S."/>
            <person name="Cogoni C."/>
            <person name="Macino G."/>
            <person name="Catcheside D.E.A."/>
            <person name="Li W."/>
            <person name="Pratt R.J."/>
            <person name="Osmani S.A."/>
            <person name="DeSouza C.P.C."/>
            <person name="Glass N.L."/>
            <person name="Orbach M.J."/>
            <person name="Berglund J.A."/>
            <person name="Voelker R."/>
            <person name="Yarden O."/>
            <person name="Plamann M."/>
            <person name="Seiler S."/>
            <person name="Dunlap J.C."/>
            <person name="Radford A."/>
            <person name="Aramayo R."/>
            <person name="Natvig D.O."/>
            <person name="Alex L.A."/>
            <person name="Mannhaupt G."/>
            <person name="Ebbole D.J."/>
            <person name="Freitag M."/>
            <person name="Paulsen I."/>
            <person name="Sachs M.S."/>
            <person name="Lander E.S."/>
            <person name="Nusbaum C."/>
            <person name="Birren B.W."/>
        </authorList>
    </citation>
    <scope>NUCLEOTIDE SEQUENCE [LARGE SCALE GENOMIC DNA]</scope>
    <source>
        <strain>ATCC 24698 / 74-OR23-1A / CBS 708.71 / DSM 1257 / FGSC 987</strain>
    </source>
</reference>
<organism>
    <name type="scientific">Neurospora crassa (strain ATCC 24698 / 74-OR23-1A / CBS 708.71 / DSM 1257 / FGSC 987)</name>
    <dbReference type="NCBI Taxonomy" id="367110"/>
    <lineage>
        <taxon>Eukaryota</taxon>
        <taxon>Fungi</taxon>
        <taxon>Dikarya</taxon>
        <taxon>Ascomycota</taxon>
        <taxon>Pezizomycotina</taxon>
        <taxon>Sordariomycetes</taxon>
        <taxon>Sordariomycetidae</taxon>
        <taxon>Sordariales</taxon>
        <taxon>Sordariaceae</taxon>
        <taxon>Neurospora</taxon>
    </lineage>
</organism>
<protein>
    <recommendedName>
        <fullName>Ubiquitin-conjugating enzyme E2 2</fullName>
        <ecNumber>2.3.2.23</ecNumber>
    </recommendedName>
    <alternativeName>
        <fullName>E2 ubiquitin-conjugating enzyme 2</fullName>
    </alternativeName>
    <alternativeName>
        <fullName>Mutagen-sensitive protein 8</fullName>
    </alternativeName>
    <alternativeName>
        <fullName>Ubiquitin carrier protein ubc2</fullName>
    </alternativeName>
    <alternativeName>
        <fullName>Ubiquitin-protein ligase ubc2</fullName>
    </alternativeName>
</protein>
<comment type="function">
    <text evidence="2">Catalyzes the covalent attachment of ubiquitin to other proteins. Plays a role in transcription regulation by catalyzing the monoubiquitination of histone H2B to form H2BK123ub1. H2BK123ub1 gives a specific tag for epigenetic transcriptional activation and is also a prerequisite for H3K4me and H3K79me formation. Also involved in postreplication repair of UV-damaged DNA, in N-end rule-dependent protein degradation and in sporulation.</text>
</comment>
<comment type="catalytic activity">
    <reaction evidence="2 3">
        <text>S-ubiquitinyl-[E1 ubiquitin-activating enzyme]-L-cysteine + [E2 ubiquitin-conjugating enzyme]-L-cysteine = [E1 ubiquitin-activating enzyme]-L-cysteine + S-ubiquitinyl-[E2 ubiquitin-conjugating enzyme]-L-cysteine.</text>
        <dbReference type="EC" id="2.3.2.23"/>
    </reaction>
</comment>
<comment type="pathway">
    <text evidence="2">Protein modification; protein ubiquitination.</text>
</comment>
<comment type="subcellular location">
    <subcellularLocation>
        <location evidence="1">Cytoplasm</location>
    </subcellularLocation>
    <subcellularLocation>
        <location evidence="1">Nucleus</location>
    </subcellularLocation>
</comment>
<comment type="similarity">
    <text evidence="2">Belongs to the ubiquitin-conjugating enzyme family.</text>
</comment>
<name>UBC2_NEUCR</name>